<gene>
    <name evidence="1" type="primary">ileS</name>
    <name type="ordered locus">MM_2967</name>
</gene>
<proteinExistence type="inferred from homology"/>
<reference key="1">
    <citation type="journal article" date="2002" name="J. Mol. Microbiol. Biotechnol.">
        <title>The genome of Methanosarcina mazei: evidence for lateral gene transfer between Bacteria and Archaea.</title>
        <authorList>
            <person name="Deppenmeier U."/>
            <person name="Johann A."/>
            <person name="Hartsch T."/>
            <person name="Merkl R."/>
            <person name="Schmitz R.A."/>
            <person name="Martinez-Arias R."/>
            <person name="Henne A."/>
            <person name="Wiezer A."/>
            <person name="Baeumer S."/>
            <person name="Jacobi C."/>
            <person name="Brueggemann H."/>
            <person name="Lienard T."/>
            <person name="Christmann A."/>
            <person name="Boemecke M."/>
            <person name="Steckel S."/>
            <person name="Bhattacharyya A."/>
            <person name="Lykidis A."/>
            <person name="Overbeek R."/>
            <person name="Klenk H.-P."/>
            <person name="Gunsalus R.P."/>
            <person name="Fritz H.-J."/>
            <person name="Gottschalk G."/>
        </authorList>
    </citation>
    <scope>NUCLEOTIDE SEQUENCE [LARGE SCALE GENOMIC DNA]</scope>
    <source>
        <strain>ATCC BAA-159 / DSM 3647 / Goe1 / Go1 / JCM 11833 / OCM 88</strain>
    </source>
</reference>
<dbReference type="EC" id="6.1.1.5" evidence="1"/>
<dbReference type="EMBL" id="AE008384">
    <property type="protein sequence ID" value="AAM32663.1"/>
    <property type="molecule type" value="Genomic_DNA"/>
</dbReference>
<dbReference type="RefSeq" id="WP_011034868.1">
    <property type="nucleotide sequence ID" value="NC_003901.1"/>
</dbReference>
<dbReference type="SMR" id="Q8PSV9"/>
<dbReference type="GeneID" id="1481309"/>
<dbReference type="GeneID" id="82162059"/>
<dbReference type="KEGG" id="mma:MM_2967"/>
<dbReference type="PATRIC" id="fig|192952.21.peg.3444"/>
<dbReference type="eggNOG" id="arCOG00807">
    <property type="taxonomic scope" value="Archaea"/>
</dbReference>
<dbReference type="HOGENOM" id="CLU_001493_1_1_2"/>
<dbReference type="Proteomes" id="UP000000595">
    <property type="component" value="Chromosome"/>
</dbReference>
<dbReference type="GO" id="GO:0005737">
    <property type="term" value="C:cytoplasm"/>
    <property type="evidence" value="ECO:0007669"/>
    <property type="project" value="UniProtKB-SubCell"/>
</dbReference>
<dbReference type="GO" id="GO:0002161">
    <property type="term" value="F:aminoacyl-tRNA deacylase activity"/>
    <property type="evidence" value="ECO:0007669"/>
    <property type="project" value="InterPro"/>
</dbReference>
<dbReference type="GO" id="GO:0005524">
    <property type="term" value="F:ATP binding"/>
    <property type="evidence" value="ECO:0007669"/>
    <property type="project" value="UniProtKB-UniRule"/>
</dbReference>
<dbReference type="GO" id="GO:0004822">
    <property type="term" value="F:isoleucine-tRNA ligase activity"/>
    <property type="evidence" value="ECO:0007669"/>
    <property type="project" value="UniProtKB-UniRule"/>
</dbReference>
<dbReference type="GO" id="GO:0000049">
    <property type="term" value="F:tRNA binding"/>
    <property type="evidence" value="ECO:0007669"/>
    <property type="project" value="InterPro"/>
</dbReference>
<dbReference type="GO" id="GO:0008270">
    <property type="term" value="F:zinc ion binding"/>
    <property type="evidence" value="ECO:0007669"/>
    <property type="project" value="UniProtKB-UniRule"/>
</dbReference>
<dbReference type="GO" id="GO:0006428">
    <property type="term" value="P:isoleucyl-tRNA aminoacylation"/>
    <property type="evidence" value="ECO:0007669"/>
    <property type="project" value="UniProtKB-UniRule"/>
</dbReference>
<dbReference type="CDD" id="cd07961">
    <property type="entry name" value="Anticodon_Ia_Ile_ABEc"/>
    <property type="match status" value="1"/>
</dbReference>
<dbReference type="CDD" id="cd00818">
    <property type="entry name" value="IleRS_core"/>
    <property type="match status" value="1"/>
</dbReference>
<dbReference type="FunFam" id="3.40.50.620:FF:000286">
    <property type="entry name" value="Isoleucine--tRNA ligase"/>
    <property type="match status" value="1"/>
</dbReference>
<dbReference type="FunFam" id="1.10.730.10:FF:000033">
    <property type="entry name" value="Valine--tRNA ligase"/>
    <property type="match status" value="1"/>
</dbReference>
<dbReference type="Gene3D" id="3.30.720.200">
    <property type="match status" value="1"/>
</dbReference>
<dbReference type="Gene3D" id="3.40.50.620">
    <property type="entry name" value="HUPs"/>
    <property type="match status" value="2"/>
</dbReference>
<dbReference type="Gene3D" id="1.10.730.10">
    <property type="entry name" value="Isoleucyl-tRNA Synthetase, Domain 1"/>
    <property type="match status" value="1"/>
</dbReference>
<dbReference type="HAMAP" id="MF_02003">
    <property type="entry name" value="Ile_tRNA_synth_type2"/>
    <property type="match status" value="1"/>
</dbReference>
<dbReference type="InterPro" id="IPR001412">
    <property type="entry name" value="aa-tRNA-synth_I_CS"/>
</dbReference>
<dbReference type="InterPro" id="IPR002300">
    <property type="entry name" value="aa-tRNA-synth_Ia"/>
</dbReference>
<dbReference type="InterPro" id="IPR033709">
    <property type="entry name" value="Anticodon_Ile_ABEc"/>
</dbReference>
<dbReference type="InterPro" id="IPR002301">
    <property type="entry name" value="Ile-tRNA-ligase"/>
</dbReference>
<dbReference type="InterPro" id="IPR023586">
    <property type="entry name" value="Ile-tRNA-ligase_type2"/>
</dbReference>
<dbReference type="InterPro" id="IPR013155">
    <property type="entry name" value="M/V/L/I-tRNA-synth_anticd-bd"/>
</dbReference>
<dbReference type="InterPro" id="IPR014729">
    <property type="entry name" value="Rossmann-like_a/b/a_fold"/>
</dbReference>
<dbReference type="InterPro" id="IPR009080">
    <property type="entry name" value="tRNAsynth_Ia_anticodon-bd"/>
</dbReference>
<dbReference type="InterPro" id="IPR009008">
    <property type="entry name" value="Val/Leu/Ile-tRNA-synth_edit"/>
</dbReference>
<dbReference type="NCBIfam" id="TIGR00392">
    <property type="entry name" value="ileS"/>
    <property type="match status" value="1"/>
</dbReference>
<dbReference type="PANTHER" id="PTHR42780:SF1">
    <property type="entry name" value="ISOLEUCINE--TRNA LIGASE, CYTOPLASMIC"/>
    <property type="match status" value="1"/>
</dbReference>
<dbReference type="PANTHER" id="PTHR42780">
    <property type="entry name" value="SOLEUCYL-TRNA SYNTHETASE"/>
    <property type="match status" value="1"/>
</dbReference>
<dbReference type="Pfam" id="PF08264">
    <property type="entry name" value="Anticodon_1"/>
    <property type="match status" value="1"/>
</dbReference>
<dbReference type="Pfam" id="PF19302">
    <property type="entry name" value="DUF5915"/>
    <property type="match status" value="1"/>
</dbReference>
<dbReference type="Pfam" id="PF00133">
    <property type="entry name" value="tRNA-synt_1"/>
    <property type="match status" value="1"/>
</dbReference>
<dbReference type="PRINTS" id="PR00984">
    <property type="entry name" value="TRNASYNTHILE"/>
</dbReference>
<dbReference type="SUPFAM" id="SSF47323">
    <property type="entry name" value="Anticodon-binding domain of a subclass of class I aminoacyl-tRNA synthetases"/>
    <property type="match status" value="1"/>
</dbReference>
<dbReference type="SUPFAM" id="SSF52374">
    <property type="entry name" value="Nucleotidylyl transferase"/>
    <property type="match status" value="1"/>
</dbReference>
<dbReference type="SUPFAM" id="SSF50677">
    <property type="entry name" value="ValRS/IleRS/LeuRS editing domain"/>
    <property type="match status" value="1"/>
</dbReference>
<dbReference type="PROSITE" id="PS00178">
    <property type="entry name" value="AA_TRNA_LIGASE_I"/>
    <property type="match status" value="1"/>
</dbReference>
<sequence>MIKEITAKYDAEQIEKKVTQFWEDSDAYRKTREHRKSGKRLFFVDGPPYTTGHIHLGTAWNKIIKDSILRYYSMNNRYILERPGWDMHGLPIEVKVEGVLGFKSKKDIESFGVENFIEKCKEFAIKQKQAMTEQFQRLGVWLQWPDPYMTLKDEYIEAAWWTLKQASEKDLLEVGKRSVNWCPRCETAIADSEVEYSERTDPSIYVKFRVKGEENTFIVIWTTTPWTIPANVAVAVHPAYEYSKFRAIRQDGSEEILIAATELIKNVLKQGRYTDFEVLETMLGEELTKLEYESPVGDLVPVQNEIKHGVYLADFVTVENTGCVHIAPGHGMDDFNLGAKHKLPILCPVGSNGSYTEEAGEYAGKNVKEANPIVIEDLKARNRLLAEGTVTHRYGHCWRCKTPIIYLATEQWFLKVTEIKEKMLEEIDAVDWYPDWAGSARFRTWVEGARDWCISRQRYWGIPIPVWKCKKCGKLEVIGTKAELLEKAGLNGDIELHRPYVDRVTVPCECGGEKKRVEDVFDVWFDSAVASWATLKFPQTRDQFDEWWPADFITEGHDQTRGWFYSQLGASMVGFGRAPYKSVLMHGFTLDAGGKKMSKSLGNVISPLDIIGRFGADTLRAYVLSSSAPWDDLKFNLEEVETIHRSINILWNVFRFPLPYMALDNFDPMQVSLDSVRDALREEDRWILSRAQSVVKSVDEAMSGYLLHKAVREILDFTLEDLSRWYIQLIRPRTWTEADDPDKLAAYCVLYEVYVTITKLISPFMPYLAEEMYQNLIRNVDPKAPESVHMCDWPKVNEAYLDTKLEEAMNTARSIVEAASNARQKAGRKLRWPISRIVVSPESEDAARAVERLRSVLMDQTNSKDIVLTGVGKSWDELGLEVIPDPGKIGPVFKRDAGKVVPALQKVDGFALKKAFAEAGEFELTLADGSTVKVTPEMANFKETLPEGTASAESDAGPVYVDANLTPELEAEGYAREVIRRLQDMRKELDLVVDENIQVSVRIEDERVLKLVETLKGLIAEEVRADVFDIGSGVNVSGDLVKDWDVEGIAMKMGIAKK</sequence>
<protein>
    <recommendedName>
        <fullName evidence="1">Isoleucine--tRNA ligase</fullName>
        <ecNumber evidence="1">6.1.1.5</ecNumber>
    </recommendedName>
    <alternativeName>
        <fullName evidence="1">Isoleucyl-tRNA synthetase</fullName>
        <shortName evidence="1">IleRS</shortName>
    </alternativeName>
</protein>
<feature type="chain" id="PRO_0000098584" description="Isoleucine--tRNA ligase">
    <location>
        <begin position="1"/>
        <end position="1058"/>
    </location>
</feature>
<feature type="short sequence motif" description="'HIGH' region">
    <location>
        <begin position="48"/>
        <end position="58"/>
    </location>
</feature>
<feature type="short sequence motif" description="'KMSKS' region">
    <location>
        <begin position="596"/>
        <end position="600"/>
    </location>
</feature>
<feature type="binding site" evidence="1">
    <location>
        <position position="599"/>
    </location>
    <ligand>
        <name>ATP</name>
        <dbReference type="ChEBI" id="CHEBI:30616"/>
    </ligand>
</feature>
<accession>Q8PSV9</accession>
<evidence type="ECO:0000255" key="1">
    <source>
        <dbReference type="HAMAP-Rule" id="MF_02003"/>
    </source>
</evidence>
<comment type="function">
    <text evidence="1">Catalyzes the attachment of isoleucine to tRNA(Ile). As IleRS can inadvertently accommodate and process structurally similar amino acids such as valine, to avoid such errors it has two additional distinct tRNA(Ile)-dependent editing activities. One activity is designated as 'pretransfer' editing and involves the hydrolysis of activated Val-AMP. The other activity is designated 'posttransfer' editing and involves deacylation of mischarged Val-tRNA(Ile).</text>
</comment>
<comment type="catalytic activity">
    <reaction evidence="1">
        <text>tRNA(Ile) + L-isoleucine + ATP = L-isoleucyl-tRNA(Ile) + AMP + diphosphate</text>
        <dbReference type="Rhea" id="RHEA:11060"/>
        <dbReference type="Rhea" id="RHEA-COMP:9666"/>
        <dbReference type="Rhea" id="RHEA-COMP:9695"/>
        <dbReference type="ChEBI" id="CHEBI:30616"/>
        <dbReference type="ChEBI" id="CHEBI:33019"/>
        <dbReference type="ChEBI" id="CHEBI:58045"/>
        <dbReference type="ChEBI" id="CHEBI:78442"/>
        <dbReference type="ChEBI" id="CHEBI:78528"/>
        <dbReference type="ChEBI" id="CHEBI:456215"/>
        <dbReference type="EC" id="6.1.1.5"/>
    </reaction>
</comment>
<comment type="cofactor">
    <cofactor evidence="1">
        <name>Zn(2+)</name>
        <dbReference type="ChEBI" id="CHEBI:29105"/>
    </cofactor>
</comment>
<comment type="subunit">
    <text evidence="1">Monomer.</text>
</comment>
<comment type="subcellular location">
    <subcellularLocation>
        <location evidence="1">Cytoplasm</location>
    </subcellularLocation>
</comment>
<comment type="domain">
    <text evidence="1">IleRS has two distinct active sites: one for aminoacylation and one for editing. The misactivated valine is translocated from the active site to the editing site, which sterically excludes the correctly activated isoleucine. The single editing site contains two valyl binding pockets, one specific for each substrate (Val-AMP or Val-tRNA(Ile)).</text>
</comment>
<comment type="similarity">
    <text evidence="1">Belongs to the class-I aminoacyl-tRNA synthetase family. IleS type 2 subfamily.</text>
</comment>
<name>SYI_METMA</name>
<keyword id="KW-0030">Aminoacyl-tRNA synthetase</keyword>
<keyword id="KW-0067">ATP-binding</keyword>
<keyword id="KW-0963">Cytoplasm</keyword>
<keyword id="KW-0436">Ligase</keyword>
<keyword id="KW-0479">Metal-binding</keyword>
<keyword id="KW-0547">Nucleotide-binding</keyword>
<keyword id="KW-0648">Protein biosynthesis</keyword>
<keyword id="KW-0862">Zinc</keyword>
<organism>
    <name type="scientific">Methanosarcina mazei (strain ATCC BAA-159 / DSM 3647 / Goe1 / Go1 / JCM 11833 / OCM 88)</name>
    <name type="common">Methanosarcina frisia</name>
    <dbReference type="NCBI Taxonomy" id="192952"/>
    <lineage>
        <taxon>Archaea</taxon>
        <taxon>Methanobacteriati</taxon>
        <taxon>Methanobacteriota</taxon>
        <taxon>Stenosarchaea group</taxon>
        <taxon>Methanomicrobia</taxon>
        <taxon>Methanosarcinales</taxon>
        <taxon>Methanosarcinaceae</taxon>
        <taxon>Methanosarcina</taxon>
    </lineage>
</organism>